<feature type="chain" id="PRO_1000099702" description="3-phosphoshikimate 1-carboxyvinyltransferase">
    <location>
        <begin position="1"/>
        <end position="428"/>
    </location>
</feature>
<feature type="active site" description="Proton acceptor" evidence="1">
    <location>
        <position position="314"/>
    </location>
</feature>
<feature type="binding site" evidence="1">
    <location>
        <position position="23"/>
    </location>
    <ligand>
        <name>3-phosphoshikimate</name>
        <dbReference type="ChEBI" id="CHEBI:145989"/>
    </ligand>
</feature>
<feature type="binding site" evidence="1">
    <location>
        <position position="23"/>
    </location>
    <ligand>
        <name>phosphoenolpyruvate</name>
        <dbReference type="ChEBI" id="CHEBI:58702"/>
    </ligand>
</feature>
<feature type="binding site" evidence="1">
    <location>
        <position position="24"/>
    </location>
    <ligand>
        <name>3-phosphoshikimate</name>
        <dbReference type="ChEBI" id="CHEBI:145989"/>
    </ligand>
</feature>
<feature type="binding site" evidence="1">
    <location>
        <position position="28"/>
    </location>
    <ligand>
        <name>3-phosphoshikimate</name>
        <dbReference type="ChEBI" id="CHEBI:145989"/>
    </ligand>
</feature>
<feature type="binding site" evidence="1">
    <location>
        <position position="97"/>
    </location>
    <ligand>
        <name>phosphoenolpyruvate</name>
        <dbReference type="ChEBI" id="CHEBI:58702"/>
    </ligand>
</feature>
<feature type="binding site" evidence="1">
    <location>
        <position position="125"/>
    </location>
    <ligand>
        <name>phosphoenolpyruvate</name>
        <dbReference type="ChEBI" id="CHEBI:58702"/>
    </ligand>
</feature>
<feature type="binding site" evidence="1">
    <location>
        <position position="170"/>
    </location>
    <ligand>
        <name>3-phosphoshikimate</name>
        <dbReference type="ChEBI" id="CHEBI:145989"/>
    </ligand>
</feature>
<feature type="binding site" evidence="1">
    <location>
        <position position="171"/>
    </location>
    <ligand>
        <name>3-phosphoshikimate</name>
        <dbReference type="ChEBI" id="CHEBI:145989"/>
    </ligand>
</feature>
<feature type="binding site" evidence="1">
    <location>
        <position position="172"/>
    </location>
    <ligand>
        <name>3-phosphoshikimate</name>
        <dbReference type="ChEBI" id="CHEBI:145989"/>
    </ligand>
</feature>
<feature type="binding site" evidence="1">
    <location>
        <position position="172"/>
    </location>
    <ligand>
        <name>phosphoenolpyruvate</name>
        <dbReference type="ChEBI" id="CHEBI:58702"/>
    </ligand>
</feature>
<feature type="binding site" evidence="1">
    <location>
        <position position="198"/>
    </location>
    <ligand>
        <name>3-phosphoshikimate</name>
        <dbReference type="ChEBI" id="CHEBI:145989"/>
    </ligand>
</feature>
<feature type="binding site" evidence="1">
    <location>
        <position position="314"/>
    </location>
    <ligand>
        <name>3-phosphoshikimate</name>
        <dbReference type="ChEBI" id="CHEBI:145989"/>
    </ligand>
</feature>
<feature type="binding site" evidence="1">
    <location>
        <position position="337"/>
    </location>
    <ligand>
        <name>3-phosphoshikimate</name>
        <dbReference type="ChEBI" id="CHEBI:145989"/>
    </ligand>
</feature>
<feature type="binding site" evidence="1">
    <location>
        <position position="341"/>
    </location>
    <ligand>
        <name>3-phosphoshikimate</name>
        <dbReference type="ChEBI" id="CHEBI:145989"/>
    </ligand>
</feature>
<feature type="binding site" evidence="1">
    <location>
        <position position="345"/>
    </location>
    <ligand>
        <name>phosphoenolpyruvate</name>
        <dbReference type="ChEBI" id="CHEBI:58702"/>
    </ligand>
</feature>
<feature type="binding site" evidence="1">
    <location>
        <position position="387"/>
    </location>
    <ligand>
        <name>phosphoenolpyruvate</name>
        <dbReference type="ChEBI" id="CHEBI:58702"/>
    </ligand>
</feature>
<feature type="binding site" evidence="1">
    <location>
        <position position="412"/>
    </location>
    <ligand>
        <name>phosphoenolpyruvate</name>
        <dbReference type="ChEBI" id="CHEBI:58702"/>
    </ligand>
</feature>
<name>AROA_ERWT9</name>
<comment type="function">
    <text evidence="1">Catalyzes the transfer of the enolpyruvyl moiety of phosphoenolpyruvate (PEP) to the 5-hydroxyl of shikimate-3-phosphate (S3P) to produce enolpyruvyl shikimate-3-phosphate and inorganic phosphate.</text>
</comment>
<comment type="catalytic activity">
    <reaction evidence="1">
        <text>3-phosphoshikimate + phosphoenolpyruvate = 5-O-(1-carboxyvinyl)-3-phosphoshikimate + phosphate</text>
        <dbReference type="Rhea" id="RHEA:21256"/>
        <dbReference type="ChEBI" id="CHEBI:43474"/>
        <dbReference type="ChEBI" id="CHEBI:57701"/>
        <dbReference type="ChEBI" id="CHEBI:58702"/>
        <dbReference type="ChEBI" id="CHEBI:145989"/>
        <dbReference type="EC" id="2.5.1.19"/>
    </reaction>
    <physiologicalReaction direction="left-to-right" evidence="1">
        <dbReference type="Rhea" id="RHEA:21257"/>
    </physiologicalReaction>
</comment>
<comment type="pathway">
    <text evidence="1">Metabolic intermediate biosynthesis; chorismate biosynthesis; chorismate from D-erythrose 4-phosphate and phosphoenolpyruvate: step 6/7.</text>
</comment>
<comment type="subunit">
    <text evidence="1">Monomer.</text>
</comment>
<comment type="subcellular location">
    <subcellularLocation>
        <location evidence="1">Cytoplasm</location>
    </subcellularLocation>
</comment>
<comment type="similarity">
    <text evidence="1">Belongs to the EPSP synthase family.</text>
</comment>
<reference key="1">
    <citation type="journal article" date="2008" name="Environ. Microbiol.">
        <title>The genome of Erwinia tasmaniensis strain Et1/99, a non-pathogenic bacterium in the genus Erwinia.</title>
        <authorList>
            <person name="Kube M."/>
            <person name="Migdoll A.M."/>
            <person name="Mueller I."/>
            <person name="Kuhl H."/>
            <person name="Beck A."/>
            <person name="Reinhardt R."/>
            <person name="Geider K."/>
        </authorList>
    </citation>
    <scope>NUCLEOTIDE SEQUENCE [LARGE SCALE GENOMIC DNA]</scope>
    <source>
        <strain>DSM 17950 / CFBP 7177 / CIP 109463 / NCPPB 4357 / Et1/99</strain>
    </source>
</reference>
<dbReference type="EC" id="2.5.1.19" evidence="1"/>
<dbReference type="EMBL" id="CU468135">
    <property type="protein sequence ID" value="CAO97190.1"/>
    <property type="molecule type" value="Genomic_DNA"/>
</dbReference>
<dbReference type="RefSeq" id="WP_012441861.1">
    <property type="nucleotide sequence ID" value="NC_010694.1"/>
</dbReference>
<dbReference type="SMR" id="B2VC79"/>
<dbReference type="STRING" id="465817.ETA_21440"/>
<dbReference type="KEGG" id="eta:ETA_21440"/>
<dbReference type="eggNOG" id="COG0128">
    <property type="taxonomic scope" value="Bacteria"/>
</dbReference>
<dbReference type="HOGENOM" id="CLU_024321_0_0_6"/>
<dbReference type="OrthoDB" id="9809920at2"/>
<dbReference type="UniPathway" id="UPA00053">
    <property type="reaction ID" value="UER00089"/>
</dbReference>
<dbReference type="Proteomes" id="UP000001726">
    <property type="component" value="Chromosome"/>
</dbReference>
<dbReference type="GO" id="GO:0005737">
    <property type="term" value="C:cytoplasm"/>
    <property type="evidence" value="ECO:0007669"/>
    <property type="project" value="UniProtKB-SubCell"/>
</dbReference>
<dbReference type="GO" id="GO:0003866">
    <property type="term" value="F:3-phosphoshikimate 1-carboxyvinyltransferase activity"/>
    <property type="evidence" value="ECO:0007669"/>
    <property type="project" value="UniProtKB-UniRule"/>
</dbReference>
<dbReference type="GO" id="GO:0008652">
    <property type="term" value="P:amino acid biosynthetic process"/>
    <property type="evidence" value="ECO:0007669"/>
    <property type="project" value="UniProtKB-KW"/>
</dbReference>
<dbReference type="GO" id="GO:0009073">
    <property type="term" value="P:aromatic amino acid family biosynthetic process"/>
    <property type="evidence" value="ECO:0007669"/>
    <property type="project" value="UniProtKB-KW"/>
</dbReference>
<dbReference type="GO" id="GO:0009423">
    <property type="term" value="P:chorismate biosynthetic process"/>
    <property type="evidence" value="ECO:0007669"/>
    <property type="project" value="UniProtKB-UniRule"/>
</dbReference>
<dbReference type="CDD" id="cd01556">
    <property type="entry name" value="EPSP_synthase"/>
    <property type="match status" value="1"/>
</dbReference>
<dbReference type="FunFam" id="3.65.10.10:FF:000003">
    <property type="entry name" value="3-phosphoshikimate 1-carboxyvinyltransferase"/>
    <property type="match status" value="1"/>
</dbReference>
<dbReference type="FunFam" id="3.65.10.10:FF:000004">
    <property type="entry name" value="3-phosphoshikimate 1-carboxyvinyltransferase"/>
    <property type="match status" value="1"/>
</dbReference>
<dbReference type="Gene3D" id="3.65.10.10">
    <property type="entry name" value="Enolpyruvate transferase domain"/>
    <property type="match status" value="2"/>
</dbReference>
<dbReference type="HAMAP" id="MF_00210">
    <property type="entry name" value="EPSP_synth"/>
    <property type="match status" value="1"/>
</dbReference>
<dbReference type="InterPro" id="IPR001986">
    <property type="entry name" value="Enolpyruvate_Tfrase_dom"/>
</dbReference>
<dbReference type="InterPro" id="IPR036968">
    <property type="entry name" value="Enolpyruvate_Tfrase_sf"/>
</dbReference>
<dbReference type="InterPro" id="IPR006264">
    <property type="entry name" value="EPSP_synthase"/>
</dbReference>
<dbReference type="InterPro" id="IPR023193">
    <property type="entry name" value="EPSP_synthase_CS"/>
</dbReference>
<dbReference type="InterPro" id="IPR013792">
    <property type="entry name" value="RNA3'P_cycl/enolpyr_Trfase_a/b"/>
</dbReference>
<dbReference type="NCBIfam" id="TIGR01356">
    <property type="entry name" value="aroA"/>
    <property type="match status" value="1"/>
</dbReference>
<dbReference type="PANTHER" id="PTHR21090">
    <property type="entry name" value="AROM/DEHYDROQUINATE SYNTHASE"/>
    <property type="match status" value="1"/>
</dbReference>
<dbReference type="PANTHER" id="PTHR21090:SF5">
    <property type="entry name" value="PENTAFUNCTIONAL AROM POLYPEPTIDE"/>
    <property type="match status" value="1"/>
</dbReference>
<dbReference type="Pfam" id="PF00275">
    <property type="entry name" value="EPSP_synthase"/>
    <property type="match status" value="1"/>
</dbReference>
<dbReference type="PIRSF" id="PIRSF000505">
    <property type="entry name" value="EPSPS"/>
    <property type="match status" value="1"/>
</dbReference>
<dbReference type="SUPFAM" id="SSF55205">
    <property type="entry name" value="EPT/RTPC-like"/>
    <property type="match status" value="1"/>
</dbReference>
<dbReference type="PROSITE" id="PS00104">
    <property type="entry name" value="EPSP_SYNTHASE_1"/>
    <property type="match status" value="1"/>
</dbReference>
<dbReference type="PROSITE" id="PS00885">
    <property type="entry name" value="EPSP_SYNTHASE_2"/>
    <property type="match status" value="1"/>
</dbReference>
<keyword id="KW-0028">Amino-acid biosynthesis</keyword>
<keyword id="KW-0057">Aromatic amino acid biosynthesis</keyword>
<keyword id="KW-0963">Cytoplasm</keyword>
<keyword id="KW-1185">Reference proteome</keyword>
<keyword id="KW-0808">Transferase</keyword>
<gene>
    <name evidence="1" type="primary">aroA</name>
    <name type="ordered locus">ETA_21440</name>
</gene>
<proteinExistence type="inferred from homology"/>
<accession>B2VC79</accession>
<evidence type="ECO:0000255" key="1">
    <source>
        <dbReference type="HAMAP-Rule" id="MF_00210"/>
    </source>
</evidence>
<organism>
    <name type="scientific">Erwinia tasmaniensis (strain DSM 17950 / CFBP 7177 / CIP 109463 / NCPPB 4357 / Et1/99)</name>
    <dbReference type="NCBI Taxonomy" id="465817"/>
    <lineage>
        <taxon>Bacteria</taxon>
        <taxon>Pseudomonadati</taxon>
        <taxon>Pseudomonadota</taxon>
        <taxon>Gammaproteobacteria</taxon>
        <taxon>Enterobacterales</taxon>
        <taxon>Erwiniaceae</taxon>
        <taxon>Erwinia</taxon>
    </lineage>
</organism>
<sequence length="428" mass="45993">MQDSLTLQPIALVDGTVNLPGSKSVSNRALLLAALAEGTTRLTNLLDSDDVRHMLDALKAIGVKYSLSADRTCCEIVGQGGPLNAKEPLELFLGNAGTAMRPLAAALCIGNGDVVLTGEPRMKERPIGHLVDALRQGGAEVEYLEQENYPPLRVKGGFSGGEVTVNGSVSSQFLTALLMAAPLAPNDTRIVIKGDLVSKPYIDITLKLMATFGVVVENNDYDTFHISGQQQYQATREYLVEGDASSASYFLAAAAIKGGTVKVTGIGRNSMQGDIHFADVLEKMGASVEWGDDYIACTRGDLNAVDLDMNHIPDAAMTIATTALFAQGTTVMRNIYNWRVKETDRLTAMATELRKVGAEVEEGHDFISITPPAKIVFAEIGTYNDHRMAMCFSLVALSSSPVTILDPKCTAKTFPDYFEQLARLSHLA</sequence>
<protein>
    <recommendedName>
        <fullName evidence="1">3-phosphoshikimate 1-carboxyvinyltransferase</fullName>
        <ecNumber evidence="1">2.5.1.19</ecNumber>
    </recommendedName>
    <alternativeName>
        <fullName evidence="1">5-enolpyruvylshikimate-3-phosphate synthase</fullName>
        <shortName evidence="1">EPSP synthase</shortName>
        <shortName evidence="1">EPSPS</shortName>
    </alternativeName>
</protein>